<gene>
    <name type="ordered locus">Mfla_1296</name>
</gene>
<accession>Q1H1S3</accession>
<sequence>MSLRPIETAIASLTMLMLQGCAHAGKLDEKVPYPQPADGYQRNVIHLPMLADEENTKLELQVGKTMQVDCNHHSFGATVVEHTVKGWGYPYYEVNSIGGPISTRMACPSGTETSKFVAAHGNGFVVRYNSKLPVVVYIPQGFELRYRTWQPVQEFQTVPQD</sequence>
<name>ECOTL_METFK</name>
<keyword id="KW-1185">Reference proteome</keyword>
<keyword id="KW-0732">Signal</keyword>
<organism>
    <name type="scientific">Methylobacillus flagellatus (strain ATCC 51484 / DSM 6875 / VKM B-1610 / KT)</name>
    <dbReference type="NCBI Taxonomy" id="265072"/>
    <lineage>
        <taxon>Bacteria</taxon>
        <taxon>Pseudomonadati</taxon>
        <taxon>Pseudomonadota</taxon>
        <taxon>Betaproteobacteria</taxon>
        <taxon>Nitrosomonadales</taxon>
        <taxon>Methylophilaceae</taxon>
        <taxon>Methylobacillus</taxon>
    </lineage>
</organism>
<dbReference type="EMBL" id="CP000284">
    <property type="protein sequence ID" value="ABE49564.1"/>
    <property type="molecule type" value="Genomic_DNA"/>
</dbReference>
<dbReference type="RefSeq" id="WP_011479518.1">
    <property type="nucleotide sequence ID" value="NC_007947.1"/>
</dbReference>
<dbReference type="SMR" id="Q1H1S3"/>
<dbReference type="MEROPS" id="I11.001"/>
<dbReference type="KEGG" id="mfa:Mfla_1296"/>
<dbReference type="eggNOG" id="COG4574">
    <property type="taxonomic scope" value="Bacteria"/>
</dbReference>
<dbReference type="HOGENOM" id="CLU_111565_0_0_4"/>
<dbReference type="OrthoDB" id="997196at2"/>
<dbReference type="Proteomes" id="UP000002440">
    <property type="component" value="Chromosome"/>
</dbReference>
<dbReference type="GO" id="GO:0004867">
    <property type="term" value="F:serine-type endopeptidase inhibitor activity"/>
    <property type="evidence" value="ECO:0007669"/>
    <property type="project" value="InterPro"/>
</dbReference>
<dbReference type="Gene3D" id="2.60.40.550">
    <property type="entry name" value="Ecotin"/>
    <property type="match status" value="1"/>
</dbReference>
<dbReference type="InterPro" id="IPR036198">
    <property type="entry name" value="Ecotin_sf"/>
</dbReference>
<dbReference type="InterPro" id="IPR005658">
    <property type="entry name" value="Prot_inh_ecotin"/>
</dbReference>
<dbReference type="NCBIfam" id="NF002987">
    <property type="entry name" value="PRK03719.1"/>
    <property type="match status" value="1"/>
</dbReference>
<dbReference type="PANTHER" id="PTHR35890">
    <property type="match status" value="1"/>
</dbReference>
<dbReference type="PANTHER" id="PTHR35890:SF3">
    <property type="entry name" value="ECOTIN"/>
    <property type="match status" value="1"/>
</dbReference>
<dbReference type="Pfam" id="PF03974">
    <property type="entry name" value="Ecotin"/>
    <property type="match status" value="1"/>
</dbReference>
<dbReference type="PIRSF" id="PIRSF006865">
    <property type="entry name" value="Prot_inh_ecotin"/>
    <property type="match status" value="1"/>
</dbReference>
<dbReference type="SUPFAM" id="SSF49772">
    <property type="entry name" value="Ecotin, trypsin inhibitor"/>
    <property type="match status" value="1"/>
</dbReference>
<dbReference type="PROSITE" id="PS51257">
    <property type="entry name" value="PROKAR_LIPOPROTEIN"/>
    <property type="match status" value="1"/>
</dbReference>
<comment type="similarity">
    <text evidence="2">Belongs to the protease inhibitor I11 (ecotin) family.</text>
</comment>
<reference key="1">
    <citation type="submission" date="2006-03" db="EMBL/GenBank/DDBJ databases">
        <title>Complete sequence of Methylobacillus flagellatus KT.</title>
        <authorList>
            <consortium name="US DOE Joint Genome Institute"/>
            <person name="Copeland A."/>
            <person name="Lucas S."/>
            <person name="Lapidus A."/>
            <person name="Barry K."/>
            <person name="Detter J.C."/>
            <person name="Glavina del Rio T."/>
            <person name="Hammon N."/>
            <person name="Israni S."/>
            <person name="Dalin E."/>
            <person name="Tice H."/>
            <person name="Pitluck S."/>
            <person name="Brettin T."/>
            <person name="Bruce D."/>
            <person name="Han C."/>
            <person name="Tapia R."/>
            <person name="Saunders E."/>
            <person name="Gilna P."/>
            <person name="Schmutz J."/>
            <person name="Larimer F."/>
            <person name="Land M."/>
            <person name="Kyrpides N."/>
            <person name="Anderson I."/>
            <person name="Richardson P."/>
        </authorList>
    </citation>
    <scope>NUCLEOTIDE SEQUENCE [LARGE SCALE GENOMIC DNA]</scope>
    <source>
        <strain>ATCC 51484 / DSM 6875 / VKM B-1610 / KT</strain>
    </source>
</reference>
<protein>
    <recommendedName>
        <fullName>Putative ecotin-like protein</fullName>
    </recommendedName>
</protein>
<evidence type="ECO:0000255" key="1">
    <source>
        <dbReference type="PROSITE-ProRule" id="PRU00303"/>
    </source>
</evidence>
<evidence type="ECO:0000305" key="2"/>
<proteinExistence type="inferred from homology"/>
<feature type="signal peptide" evidence="1">
    <location>
        <begin position="1"/>
        <end position="24"/>
    </location>
</feature>
<feature type="chain" id="PRO_0000291617" description="Putative ecotin-like protein">
    <location>
        <begin position="25"/>
        <end position="161"/>
    </location>
</feature>